<proteinExistence type="predicted"/>
<keyword id="KW-1185">Reference proteome</keyword>
<sequence>MGAIERSGYTFQPEFSVVRQNGAIHVYHQGEFVEEIEFEFNGEYPDHDLIEELVNHYCFEHEI</sequence>
<dbReference type="EMBL" id="X92859">
    <property type="protein sequence ID" value="CAA63444.1"/>
    <property type="molecule type" value="Genomic_DNA"/>
</dbReference>
<dbReference type="EMBL" id="AL009126">
    <property type="protein sequence ID" value="CAB12002.1"/>
    <property type="molecule type" value="Genomic_DNA"/>
</dbReference>
<dbReference type="PIR" id="JC6189">
    <property type="entry name" value="JC6189"/>
</dbReference>
<dbReference type="RefSeq" id="NP_388090.1">
    <property type="nucleotide sequence ID" value="NC_000964.3"/>
</dbReference>
<dbReference type="RefSeq" id="WP_003234886.1">
    <property type="nucleotide sequence ID" value="NZ_OZ025638.1"/>
</dbReference>
<dbReference type="FunCoup" id="P54426">
    <property type="interactions" value="200"/>
</dbReference>
<dbReference type="STRING" id="224308.BSU02080"/>
<dbReference type="PaxDb" id="224308-BSU02080"/>
<dbReference type="EnsemblBacteria" id="CAB12002">
    <property type="protein sequence ID" value="CAB12002"/>
    <property type="gene ID" value="BSU_02080"/>
</dbReference>
<dbReference type="GeneID" id="938445"/>
<dbReference type="KEGG" id="bsu:BSU02080"/>
<dbReference type="PATRIC" id="fig|224308.179.peg.214"/>
<dbReference type="eggNOG" id="ENOG5032ZGZ">
    <property type="taxonomic scope" value="Bacteria"/>
</dbReference>
<dbReference type="InParanoid" id="P54426"/>
<dbReference type="OrthoDB" id="2971825at2"/>
<dbReference type="BioCyc" id="BSUB:BSU02080-MONOMER"/>
<dbReference type="Proteomes" id="UP000001570">
    <property type="component" value="Chromosome"/>
</dbReference>
<dbReference type="InterPro" id="IPR035314">
    <property type="entry name" value="DUF5370"/>
</dbReference>
<dbReference type="Pfam" id="PF17340">
    <property type="entry name" value="DUF5370"/>
    <property type="match status" value="1"/>
</dbReference>
<organism>
    <name type="scientific">Bacillus subtilis (strain 168)</name>
    <dbReference type="NCBI Taxonomy" id="224308"/>
    <lineage>
        <taxon>Bacteria</taxon>
        <taxon>Bacillati</taxon>
        <taxon>Bacillota</taxon>
        <taxon>Bacilli</taxon>
        <taxon>Bacillales</taxon>
        <taxon>Bacillaceae</taxon>
        <taxon>Bacillus</taxon>
    </lineage>
</organism>
<protein>
    <recommendedName>
        <fullName>Uncharacterized protein YbxH</fullName>
    </recommendedName>
    <alternativeName>
        <fullName>ORF3</fullName>
    </alternativeName>
</protein>
<reference key="1">
    <citation type="journal article" date="1997" name="Gene">
        <title>Characterization of csgA, a new member of the forespore-expressed sigmaG-regulon from Bacillus subtilis.</title>
        <authorList>
            <person name="Shcheptov M."/>
            <person name="Chyu G."/>
            <person name="Bagyan I."/>
            <person name="Cutting S.M."/>
        </authorList>
    </citation>
    <scope>NUCLEOTIDE SEQUENCE [GENOMIC DNA]</scope>
    <source>
        <strain>168 / PY79</strain>
    </source>
</reference>
<reference key="2">
    <citation type="journal article" date="1997" name="Nature">
        <title>The complete genome sequence of the Gram-positive bacterium Bacillus subtilis.</title>
        <authorList>
            <person name="Kunst F."/>
            <person name="Ogasawara N."/>
            <person name="Moszer I."/>
            <person name="Albertini A.M."/>
            <person name="Alloni G."/>
            <person name="Azevedo V."/>
            <person name="Bertero M.G."/>
            <person name="Bessieres P."/>
            <person name="Bolotin A."/>
            <person name="Borchert S."/>
            <person name="Borriss R."/>
            <person name="Boursier L."/>
            <person name="Brans A."/>
            <person name="Braun M."/>
            <person name="Brignell S.C."/>
            <person name="Bron S."/>
            <person name="Brouillet S."/>
            <person name="Bruschi C.V."/>
            <person name="Caldwell B."/>
            <person name="Capuano V."/>
            <person name="Carter N.M."/>
            <person name="Choi S.-K."/>
            <person name="Codani J.-J."/>
            <person name="Connerton I.F."/>
            <person name="Cummings N.J."/>
            <person name="Daniel R.A."/>
            <person name="Denizot F."/>
            <person name="Devine K.M."/>
            <person name="Duesterhoeft A."/>
            <person name="Ehrlich S.D."/>
            <person name="Emmerson P.T."/>
            <person name="Entian K.-D."/>
            <person name="Errington J."/>
            <person name="Fabret C."/>
            <person name="Ferrari E."/>
            <person name="Foulger D."/>
            <person name="Fritz C."/>
            <person name="Fujita M."/>
            <person name="Fujita Y."/>
            <person name="Fuma S."/>
            <person name="Galizzi A."/>
            <person name="Galleron N."/>
            <person name="Ghim S.-Y."/>
            <person name="Glaser P."/>
            <person name="Goffeau A."/>
            <person name="Golightly E.J."/>
            <person name="Grandi G."/>
            <person name="Guiseppi G."/>
            <person name="Guy B.J."/>
            <person name="Haga K."/>
            <person name="Haiech J."/>
            <person name="Harwood C.R."/>
            <person name="Henaut A."/>
            <person name="Hilbert H."/>
            <person name="Holsappel S."/>
            <person name="Hosono S."/>
            <person name="Hullo M.-F."/>
            <person name="Itaya M."/>
            <person name="Jones L.-M."/>
            <person name="Joris B."/>
            <person name="Karamata D."/>
            <person name="Kasahara Y."/>
            <person name="Klaerr-Blanchard M."/>
            <person name="Klein C."/>
            <person name="Kobayashi Y."/>
            <person name="Koetter P."/>
            <person name="Koningstein G."/>
            <person name="Krogh S."/>
            <person name="Kumano M."/>
            <person name="Kurita K."/>
            <person name="Lapidus A."/>
            <person name="Lardinois S."/>
            <person name="Lauber J."/>
            <person name="Lazarevic V."/>
            <person name="Lee S.-M."/>
            <person name="Levine A."/>
            <person name="Liu H."/>
            <person name="Masuda S."/>
            <person name="Mauel C."/>
            <person name="Medigue C."/>
            <person name="Medina N."/>
            <person name="Mellado R.P."/>
            <person name="Mizuno M."/>
            <person name="Moestl D."/>
            <person name="Nakai S."/>
            <person name="Noback M."/>
            <person name="Noone D."/>
            <person name="O'Reilly M."/>
            <person name="Ogawa K."/>
            <person name="Ogiwara A."/>
            <person name="Oudega B."/>
            <person name="Park S.-H."/>
            <person name="Parro V."/>
            <person name="Pohl T.M."/>
            <person name="Portetelle D."/>
            <person name="Porwollik S."/>
            <person name="Prescott A.M."/>
            <person name="Presecan E."/>
            <person name="Pujic P."/>
            <person name="Purnelle B."/>
            <person name="Rapoport G."/>
            <person name="Rey M."/>
            <person name="Reynolds S."/>
            <person name="Rieger M."/>
            <person name="Rivolta C."/>
            <person name="Rocha E."/>
            <person name="Roche B."/>
            <person name="Rose M."/>
            <person name="Sadaie Y."/>
            <person name="Sato T."/>
            <person name="Scanlan E."/>
            <person name="Schleich S."/>
            <person name="Schroeter R."/>
            <person name="Scoffone F."/>
            <person name="Sekiguchi J."/>
            <person name="Sekowska A."/>
            <person name="Seror S.J."/>
            <person name="Serror P."/>
            <person name="Shin B.-S."/>
            <person name="Soldo B."/>
            <person name="Sorokin A."/>
            <person name="Tacconi E."/>
            <person name="Takagi T."/>
            <person name="Takahashi H."/>
            <person name="Takemaru K."/>
            <person name="Takeuchi M."/>
            <person name="Tamakoshi A."/>
            <person name="Tanaka T."/>
            <person name="Terpstra P."/>
            <person name="Tognoni A."/>
            <person name="Tosato V."/>
            <person name="Uchiyama S."/>
            <person name="Vandenbol M."/>
            <person name="Vannier F."/>
            <person name="Vassarotti A."/>
            <person name="Viari A."/>
            <person name="Wambutt R."/>
            <person name="Wedler E."/>
            <person name="Wedler H."/>
            <person name="Weitzenegger T."/>
            <person name="Winters P."/>
            <person name="Wipat A."/>
            <person name="Yamamoto H."/>
            <person name="Yamane K."/>
            <person name="Yasumoto K."/>
            <person name="Yata K."/>
            <person name="Yoshida K."/>
            <person name="Yoshikawa H.-F."/>
            <person name="Zumstein E."/>
            <person name="Yoshikawa H."/>
            <person name="Danchin A."/>
        </authorList>
    </citation>
    <scope>NUCLEOTIDE SEQUENCE [LARGE SCALE GENOMIC DNA]</scope>
    <source>
        <strain>168</strain>
    </source>
</reference>
<feature type="chain" id="PRO_0000049467" description="Uncharacterized protein YbxH">
    <location>
        <begin position="1"/>
        <end position="63"/>
    </location>
</feature>
<gene>
    <name type="primary">ybxH</name>
    <name type="ordered locus">BSU02080</name>
</gene>
<accession>P54426</accession>
<name>YBXH_BACSU</name>